<sequence length="680" mass="76531">MKSQNKYSIRKFSVGASSILIATLLFLSGGQAQAAEKQVNMGNSQEDTVTAQSIGDQQTRENANYQRENGVDEQQHTENLTKNLHNDKTISEENHRKTDDLNKDQLKDDKNSSLNNKNIQRDTTKNNNANPSDVNQGLEQAINDGKQSKVASQQQSKEVDNSQDSNANNNLPSQSLTKEAPSLNKSDQTSQREIVNETEIEKVQPQQNNQANDKITNHNFNNEQEVKPQKDEKTLSVSDLKNNQKSPVEPTKDNDKKNGLNLLKSSAVATLPNKGTKELTAKAKDDQTNKVAKQGQYKNQDPIVLVHGFNGFTDDINPSVLAHYWGGNKMNIRQDLEENGYKAYEASISAFGSNYDRAVELYYYIKGGRVDYGAAHAAKYGHERYGKTYEGIYKDWKPGQKVHLVGHSMGGQTIRQLEELLRNGNREEIEYQKKHGGEISPLFKGNNDNMISSITTLGTPHNGTHASDLAGNEALVRQIVFDIGKMFGNKNSRVDFGLAQWGLKQKPNESYIDYVKRVKQSNLWKSKDNGFYDLTREGATDLNRKTSLNPNIVYKTYTGEATHKALNSDRQKADLNMFFPFVITGNLIGKATEKEWRENDGLVSVISSQHPFNQAYTNATDKIQKGIWQVTPTKHDWDHVDFVGQDSSDTVRTREELQDFWHHLADDLVKTEKVTDTKQA</sequence>
<name>LIP1_STAAM</name>
<dbReference type="EC" id="3.1.1.3"/>
<dbReference type="EMBL" id="BA000017">
    <property type="protein sequence ID" value="BAB58833.1"/>
    <property type="status" value="ALT_INIT"/>
    <property type="molecule type" value="Genomic_DNA"/>
</dbReference>
<dbReference type="RefSeq" id="WP_000842040.1">
    <property type="nucleotide sequence ID" value="NC_002758.2"/>
</dbReference>
<dbReference type="SMR" id="P65288"/>
<dbReference type="ESTHER" id="staau-LIP">
    <property type="family name" value="Bacterial_lip_FamI.6"/>
</dbReference>
<dbReference type="KEGG" id="sav:SAV2671"/>
<dbReference type="HOGENOM" id="CLU_023555_2_1_9"/>
<dbReference type="Proteomes" id="UP000002481">
    <property type="component" value="Chromosome"/>
</dbReference>
<dbReference type="GO" id="GO:0005576">
    <property type="term" value="C:extracellular region"/>
    <property type="evidence" value="ECO:0007669"/>
    <property type="project" value="UniProtKB-SubCell"/>
</dbReference>
<dbReference type="GO" id="GO:0046872">
    <property type="term" value="F:metal ion binding"/>
    <property type="evidence" value="ECO:0007669"/>
    <property type="project" value="UniProtKB-KW"/>
</dbReference>
<dbReference type="GO" id="GO:0004806">
    <property type="term" value="F:triacylglycerol lipase activity"/>
    <property type="evidence" value="ECO:0007669"/>
    <property type="project" value="UniProtKB-EC"/>
</dbReference>
<dbReference type="GO" id="GO:0016042">
    <property type="term" value="P:lipid catabolic process"/>
    <property type="evidence" value="ECO:0007669"/>
    <property type="project" value="UniProtKB-KW"/>
</dbReference>
<dbReference type="Gene3D" id="3.40.50.1820">
    <property type="entry name" value="alpha/beta hydrolase"/>
    <property type="match status" value="1"/>
</dbReference>
<dbReference type="InterPro" id="IPR029058">
    <property type="entry name" value="AB_hydrolase_fold"/>
</dbReference>
<dbReference type="InterPro" id="IPR056304">
    <property type="entry name" value="Lip-like_C"/>
</dbReference>
<dbReference type="InterPro" id="IPR005877">
    <property type="entry name" value="YSIRK_signal_dom"/>
</dbReference>
<dbReference type="NCBIfam" id="NF047351">
    <property type="entry name" value="lipase_YSIRK_Sa"/>
    <property type="match status" value="1"/>
</dbReference>
<dbReference type="NCBIfam" id="TIGR01168">
    <property type="entry name" value="YSIRK_signal"/>
    <property type="match status" value="1"/>
</dbReference>
<dbReference type="PANTHER" id="PTHR34043">
    <property type="entry name" value="ALPHA/BETA-HYDROLASES SUPERFAMILY PROTEIN"/>
    <property type="match status" value="1"/>
</dbReference>
<dbReference type="PANTHER" id="PTHR34043:SF3">
    <property type="entry name" value="ALPHA_BETA-HYDROLASES SUPERFAMILY PROTEIN"/>
    <property type="match status" value="1"/>
</dbReference>
<dbReference type="Pfam" id="PF24708">
    <property type="entry name" value="Lip_C"/>
    <property type="match status" value="1"/>
</dbReference>
<dbReference type="Pfam" id="PF04650">
    <property type="entry name" value="YSIRK_signal"/>
    <property type="match status" value="1"/>
</dbReference>
<dbReference type="SUPFAM" id="SSF53474">
    <property type="entry name" value="alpha/beta-Hydrolases"/>
    <property type="match status" value="1"/>
</dbReference>
<dbReference type="PROSITE" id="PS00120">
    <property type="entry name" value="LIPASE_SER"/>
    <property type="match status" value="1"/>
</dbReference>
<keyword id="KW-0106">Calcium</keyword>
<keyword id="KW-0378">Hydrolase</keyword>
<keyword id="KW-0442">Lipid degradation</keyword>
<keyword id="KW-0443">Lipid metabolism</keyword>
<keyword id="KW-0479">Metal-binding</keyword>
<keyword id="KW-0964">Secreted</keyword>
<keyword id="KW-0732">Signal</keyword>
<keyword id="KW-0865">Zymogen</keyword>
<evidence type="ECO:0000250" key="1"/>
<evidence type="ECO:0000255" key="2"/>
<evidence type="ECO:0000255" key="3">
    <source>
        <dbReference type="PROSITE-ProRule" id="PRU10037"/>
    </source>
</evidence>
<evidence type="ECO:0000256" key="4">
    <source>
        <dbReference type="SAM" id="MobiDB-lite"/>
    </source>
</evidence>
<evidence type="ECO:0000305" key="5"/>
<reference key="1">
    <citation type="journal article" date="2001" name="Lancet">
        <title>Whole genome sequencing of meticillin-resistant Staphylococcus aureus.</title>
        <authorList>
            <person name="Kuroda M."/>
            <person name="Ohta T."/>
            <person name="Uchiyama I."/>
            <person name="Baba T."/>
            <person name="Yuzawa H."/>
            <person name="Kobayashi I."/>
            <person name="Cui L."/>
            <person name="Oguchi A."/>
            <person name="Aoki K."/>
            <person name="Nagai Y."/>
            <person name="Lian J.-Q."/>
            <person name="Ito T."/>
            <person name="Kanamori M."/>
            <person name="Matsumaru H."/>
            <person name="Maruyama A."/>
            <person name="Murakami H."/>
            <person name="Hosoyama A."/>
            <person name="Mizutani-Ui Y."/>
            <person name="Takahashi N.K."/>
            <person name="Sawano T."/>
            <person name="Inoue R."/>
            <person name="Kaito C."/>
            <person name="Sekimizu K."/>
            <person name="Hirakawa H."/>
            <person name="Kuhara S."/>
            <person name="Goto S."/>
            <person name="Yabuzaki J."/>
            <person name="Kanehisa M."/>
            <person name="Yamashita A."/>
            <person name="Oshima K."/>
            <person name="Furuya K."/>
            <person name="Yoshino C."/>
            <person name="Shiba T."/>
            <person name="Hattori M."/>
            <person name="Ogasawara N."/>
            <person name="Hayashi H."/>
            <person name="Hiramatsu K."/>
        </authorList>
    </citation>
    <scope>NUCLEOTIDE SEQUENCE [LARGE SCALE GENOMIC DNA]</scope>
    <source>
        <strain>Mu50 / ATCC 700699</strain>
    </source>
</reference>
<proteinExistence type="inferred from homology"/>
<accession>P65288</accession>
<accession>Q99QX0</accession>
<gene>
    <name type="primary">lip1</name>
    <name type="ordered locus">SAV2671</name>
</gene>
<comment type="catalytic activity">
    <reaction>
        <text>a triacylglycerol + H2O = a diacylglycerol + a fatty acid + H(+)</text>
        <dbReference type="Rhea" id="RHEA:12044"/>
        <dbReference type="ChEBI" id="CHEBI:15377"/>
        <dbReference type="ChEBI" id="CHEBI:15378"/>
        <dbReference type="ChEBI" id="CHEBI:17855"/>
        <dbReference type="ChEBI" id="CHEBI:18035"/>
        <dbReference type="ChEBI" id="CHEBI:28868"/>
        <dbReference type="EC" id="3.1.1.3"/>
    </reaction>
</comment>
<comment type="subcellular location">
    <subcellularLocation>
        <location evidence="1">Secreted</location>
    </subcellularLocation>
</comment>
<comment type="similarity">
    <text evidence="5">Belongs to the AB hydrolase superfamily. Lipase family.</text>
</comment>
<comment type="sequence caution" evidence="5">
    <conflict type="erroneous initiation">
        <sequence resource="EMBL-CDS" id="BAB58833"/>
    </conflict>
    <text>Extended N-terminus.</text>
</comment>
<protein>
    <recommendedName>
        <fullName>Lipase 1</fullName>
        <ecNumber>3.1.1.3</ecNumber>
    </recommendedName>
    <alternativeName>
        <fullName>Glycerol ester hydrolase 1</fullName>
    </alternativeName>
</protein>
<organism>
    <name type="scientific">Staphylococcus aureus (strain Mu50 / ATCC 700699)</name>
    <dbReference type="NCBI Taxonomy" id="158878"/>
    <lineage>
        <taxon>Bacteria</taxon>
        <taxon>Bacillati</taxon>
        <taxon>Bacillota</taxon>
        <taxon>Bacilli</taxon>
        <taxon>Bacillales</taxon>
        <taxon>Staphylococcaceae</taxon>
        <taxon>Staphylococcus</taxon>
    </lineage>
</organism>
<feature type="signal peptide" evidence="2">
    <location>
        <begin position="1"/>
        <end position="34"/>
    </location>
</feature>
<feature type="propeptide" id="PRO_0000017748" evidence="1">
    <location>
        <begin position="35"/>
        <end position="290"/>
    </location>
</feature>
<feature type="chain" id="PRO_0000017749" description="Lipase 1">
    <location>
        <begin position="291"/>
        <end position="680"/>
    </location>
</feature>
<feature type="region of interest" description="Disordered" evidence="4">
    <location>
        <begin position="82"/>
        <end position="259"/>
    </location>
</feature>
<feature type="compositionally biased region" description="Basic and acidic residues" evidence="4">
    <location>
        <begin position="84"/>
        <end position="111"/>
    </location>
</feature>
<feature type="compositionally biased region" description="Polar residues" evidence="4">
    <location>
        <begin position="125"/>
        <end position="138"/>
    </location>
</feature>
<feature type="compositionally biased region" description="Polar residues" evidence="4">
    <location>
        <begin position="162"/>
        <end position="193"/>
    </location>
</feature>
<feature type="compositionally biased region" description="Polar residues" evidence="4">
    <location>
        <begin position="204"/>
        <end position="223"/>
    </location>
</feature>
<feature type="compositionally biased region" description="Basic and acidic residues" evidence="4">
    <location>
        <begin position="224"/>
        <end position="234"/>
    </location>
</feature>
<feature type="compositionally biased region" description="Polar residues" evidence="4">
    <location>
        <begin position="235"/>
        <end position="246"/>
    </location>
</feature>
<feature type="active site" description="Nucleophile" evidence="1">
    <location>
        <position position="408"/>
    </location>
</feature>
<feature type="active site" description="Charge relay system" evidence="3">
    <location>
        <position position="600"/>
    </location>
</feature>
<feature type="active site" description="Charge relay system" evidence="3">
    <location>
        <position position="639"/>
    </location>
</feature>
<feature type="binding site" evidence="1">
    <location>
        <position position="638"/>
    </location>
    <ligand>
        <name>Ca(2+)</name>
        <dbReference type="ChEBI" id="CHEBI:29108"/>
    </ligand>
</feature>
<feature type="binding site" evidence="1">
    <location>
        <position position="641"/>
    </location>
    <ligand>
        <name>Ca(2+)</name>
        <dbReference type="ChEBI" id="CHEBI:29108"/>
    </ligand>
</feature>
<feature type="binding site" evidence="1">
    <location>
        <position position="646"/>
    </location>
    <ligand>
        <name>Ca(2+)</name>
        <dbReference type="ChEBI" id="CHEBI:29108"/>
    </ligand>
</feature>
<feature type="binding site" evidence="1">
    <location>
        <position position="649"/>
    </location>
    <ligand>
        <name>Ca(2+)</name>
        <dbReference type="ChEBI" id="CHEBI:29108"/>
    </ligand>
</feature>